<name>TOLB_SHIF8</name>
<protein>
    <recommendedName>
        <fullName evidence="1">Tol-Pal system protein TolB</fullName>
    </recommendedName>
</protein>
<accession>Q0T6X7</accession>
<sequence length="430" mass="45941">MKQALRVAFGFLILWASVLHAEVRIVIDSGVDSGRPIGVVPFQWAGPGAAPEDIGGIVAADLRNSGKFNPLDRARLPQQPGSAQEVQPAAWSALGIDAVVVGQVTPNPDGSYNVAYQLVDTGGAPGTVLAQNSYKVNKQWLRYAGHTASDEVFEKLTGIKGAFRTRIAYVVQTNGGQFPYELRVSDYDGYNQFVVHRSPQPLMSPAWSPDGSKLAYVTFESGRSALVIQTLANGAVRQVASFPRHNGAPAFSPDGSKLAFALSKTGSLNLYVMDLASGQIRQVTDGRSNNTEPTWFPDSQNLAFTSDLAGRPQVYKVNINGGAPQRITWEGSQNQDADVSSDGKFMVMVSSNGGQQHIAKQDLATGGVQVLSSTFLDETPSLAPNGTMVIYSSSQGMGSVLNLVSTDGRFKARLPATDGQVKFPAWSPYL</sequence>
<evidence type="ECO:0000255" key="1">
    <source>
        <dbReference type="HAMAP-Rule" id="MF_00671"/>
    </source>
</evidence>
<organism>
    <name type="scientific">Shigella flexneri serotype 5b (strain 8401)</name>
    <dbReference type="NCBI Taxonomy" id="373384"/>
    <lineage>
        <taxon>Bacteria</taxon>
        <taxon>Pseudomonadati</taxon>
        <taxon>Pseudomonadota</taxon>
        <taxon>Gammaproteobacteria</taxon>
        <taxon>Enterobacterales</taxon>
        <taxon>Enterobacteriaceae</taxon>
        <taxon>Shigella</taxon>
    </lineage>
</organism>
<reference key="1">
    <citation type="journal article" date="2006" name="BMC Genomics">
        <title>Complete genome sequence of Shigella flexneri 5b and comparison with Shigella flexneri 2a.</title>
        <authorList>
            <person name="Nie H."/>
            <person name="Yang F."/>
            <person name="Zhang X."/>
            <person name="Yang J."/>
            <person name="Chen L."/>
            <person name="Wang J."/>
            <person name="Xiong Z."/>
            <person name="Peng J."/>
            <person name="Sun L."/>
            <person name="Dong J."/>
            <person name="Xue Y."/>
            <person name="Xu X."/>
            <person name="Chen S."/>
            <person name="Yao Z."/>
            <person name="Shen Y."/>
            <person name="Jin Q."/>
        </authorList>
    </citation>
    <scope>NUCLEOTIDE SEQUENCE [LARGE SCALE GENOMIC DNA]</scope>
    <source>
        <strain>8401</strain>
    </source>
</reference>
<feature type="signal peptide" evidence="1">
    <location>
        <begin position="1"/>
        <end position="21"/>
    </location>
</feature>
<feature type="chain" id="PRO_1000026711" description="Tol-Pal system protein TolB" evidence="1">
    <location>
        <begin position="22"/>
        <end position="430"/>
    </location>
</feature>
<comment type="function">
    <text evidence="1">Part of the Tol-Pal system, which plays a role in outer membrane invagination during cell division and is important for maintaining outer membrane integrity. TolB occupies a key intermediary position in the Tol-Pal system because it communicates directly with both membrane-embedded components, Pal in the outer membrane and TolA in the inner membrane.</text>
</comment>
<comment type="subunit">
    <text evidence="1">The Tol-Pal system is composed of five core proteins: the inner membrane proteins TolA, TolQ and TolR, the periplasmic protein TolB and the outer membrane protein Pal. They form a network linking the inner and outer membranes and the peptidoglycan layer.</text>
</comment>
<comment type="subcellular location">
    <subcellularLocation>
        <location evidence="1">Periplasm</location>
    </subcellularLocation>
</comment>
<comment type="similarity">
    <text evidence="1">Belongs to the TolB family.</text>
</comment>
<keyword id="KW-0131">Cell cycle</keyword>
<keyword id="KW-0132">Cell division</keyword>
<keyword id="KW-0574">Periplasm</keyword>
<keyword id="KW-0732">Signal</keyword>
<proteinExistence type="inferred from homology"/>
<dbReference type="EMBL" id="CP000266">
    <property type="protein sequence ID" value="ABF02849.1"/>
    <property type="molecule type" value="Genomic_DNA"/>
</dbReference>
<dbReference type="RefSeq" id="WP_001481358.1">
    <property type="nucleotide sequence ID" value="NC_008258.1"/>
</dbReference>
<dbReference type="SMR" id="Q0T6X7"/>
<dbReference type="KEGG" id="sfv:SFV_0596"/>
<dbReference type="HOGENOM" id="CLU_047123_0_0_6"/>
<dbReference type="Proteomes" id="UP000000659">
    <property type="component" value="Chromosome"/>
</dbReference>
<dbReference type="GO" id="GO:0042597">
    <property type="term" value="C:periplasmic space"/>
    <property type="evidence" value="ECO:0007669"/>
    <property type="project" value="UniProtKB-SubCell"/>
</dbReference>
<dbReference type="GO" id="GO:0051301">
    <property type="term" value="P:cell division"/>
    <property type="evidence" value="ECO:0007669"/>
    <property type="project" value="UniProtKB-UniRule"/>
</dbReference>
<dbReference type="GO" id="GO:0017038">
    <property type="term" value="P:protein import"/>
    <property type="evidence" value="ECO:0007669"/>
    <property type="project" value="InterPro"/>
</dbReference>
<dbReference type="FunFam" id="2.120.10.30:FF:000022">
    <property type="entry name" value="Tol-Pal system protein TolB"/>
    <property type="match status" value="1"/>
</dbReference>
<dbReference type="FunFam" id="3.40.50.10070:FF:000001">
    <property type="entry name" value="Tol-Pal system protein TolB"/>
    <property type="match status" value="1"/>
</dbReference>
<dbReference type="Gene3D" id="2.120.10.30">
    <property type="entry name" value="TolB, C-terminal domain"/>
    <property type="match status" value="1"/>
</dbReference>
<dbReference type="Gene3D" id="3.40.50.10070">
    <property type="entry name" value="TolB, N-terminal domain"/>
    <property type="match status" value="1"/>
</dbReference>
<dbReference type="HAMAP" id="MF_00671">
    <property type="entry name" value="TolB"/>
    <property type="match status" value="1"/>
</dbReference>
<dbReference type="InterPro" id="IPR011042">
    <property type="entry name" value="6-blade_b-propeller_TolB-like"/>
</dbReference>
<dbReference type="InterPro" id="IPR011659">
    <property type="entry name" value="PD40"/>
</dbReference>
<dbReference type="InterPro" id="IPR014167">
    <property type="entry name" value="Tol-Pal_TolB"/>
</dbReference>
<dbReference type="InterPro" id="IPR007195">
    <property type="entry name" value="TolB_N"/>
</dbReference>
<dbReference type="NCBIfam" id="TIGR02800">
    <property type="entry name" value="propeller_TolB"/>
    <property type="match status" value="1"/>
</dbReference>
<dbReference type="PANTHER" id="PTHR36842:SF1">
    <property type="entry name" value="PROTEIN TOLB"/>
    <property type="match status" value="1"/>
</dbReference>
<dbReference type="PANTHER" id="PTHR36842">
    <property type="entry name" value="PROTEIN TOLB HOMOLOG"/>
    <property type="match status" value="1"/>
</dbReference>
<dbReference type="Pfam" id="PF07676">
    <property type="entry name" value="PD40"/>
    <property type="match status" value="4"/>
</dbReference>
<dbReference type="Pfam" id="PF04052">
    <property type="entry name" value="TolB_N"/>
    <property type="match status" value="1"/>
</dbReference>
<dbReference type="SUPFAM" id="SSF52964">
    <property type="entry name" value="TolB, N-terminal domain"/>
    <property type="match status" value="1"/>
</dbReference>
<dbReference type="SUPFAM" id="SSF69304">
    <property type="entry name" value="Tricorn protease N-terminal domain"/>
    <property type="match status" value="1"/>
</dbReference>
<gene>
    <name evidence="1" type="primary">tolB</name>
    <name type="ordered locus">SFV_0596</name>
</gene>